<name>G1091_SHESA</name>
<organism>
    <name type="scientific">Shewanella sp. (strain ANA-3)</name>
    <dbReference type="NCBI Taxonomy" id="94122"/>
    <lineage>
        <taxon>Bacteria</taxon>
        <taxon>Pseudomonadati</taxon>
        <taxon>Pseudomonadota</taxon>
        <taxon>Gammaproteobacteria</taxon>
        <taxon>Alteromonadales</taxon>
        <taxon>Shewanellaceae</taxon>
        <taxon>Shewanella</taxon>
    </lineage>
</organism>
<dbReference type="EC" id="3.2.1.-"/>
<dbReference type="EMBL" id="CP000469">
    <property type="protein sequence ID" value="ABK47662.1"/>
    <property type="molecule type" value="Genomic_DNA"/>
</dbReference>
<dbReference type="RefSeq" id="WP_011716495.1">
    <property type="nucleotide sequence ID" value="NC_008577.1"/>
</dbReference>
<dbReference type="SMR" id="A0KV43"/>
<dbReference type="STRING" id="94122.Shewana3_1428"/>
<dbReference type="CAZy" id="GH109">
    <property type="family name" value="Glycoside Hydrolase Family 109"/>
</dbReference>
<dbReference type="KEGG" id="shn:Shewana3_1428"/>
<dbReference type="eggNOG" id="COG0673">
    <property type="taxonomic scope" value="Bacteria"/>
</dbReference>
<dbReference type="HOGENOM" id="CLU_046965_0_0_6"/>
<dbReference type="OrthoDB" id="9792935at2"/>
<dbReference type="Proteomes" id="UP000002589">
    <property type="component" value="Chromosome"/>
</dbReference>
<dbReference type="GO" id="GO:0016798">
    <property type="term" value="F:hydrolase activity, acting on glycosyl bonds"/>
    <property type="evidence" value="ECO:0007669"/>
    <property type="project" value="UniProtKB-KW"/>
</dbReference>
<dbReference type="GO" id="GO:0000166">
    <property type="term" value="F:nucleotide binding"/>
    <property type="evidence" value="ECO:0007669"/>
    <property type="project" value="InterPro"/>
</dbReference>
<dbReference type="Gene3D" id="3.30.360.10">
    <property type="entry name" value="Dihydrodipicolinate Reductase, domain 2"/>
    <property type="match status" value="1"/>
</dbReference>
<dbReference type="Gene3D" id="3.40.50.720">
    <property type="entry name" value="NAD(P)-binding Rossmann-like Domain"/>
    <property type="match status" value="1"/>
</dbReference>
<dbReference type="InterPro" id="IPR000683">
    <property type="entry name" value="Gfo/Idh/MocA-like_OxRdtase_N"/>
</dbReference>
<dbReference type="InterPro" id="IPR050463">
    <property type="entry name" value="Gfo/Idh/MocA_oxidrdct_glycsds"/>
</dbReference>
<dbReference type="InterPro" id="IPR049303">
    <property type="entry name" value="Glyco_hydro_109_C"/>
</dbReference>
<dbReference type="InterPro" id="IPR036291">
    <property type="entry name" value="NAD(P)-bd_dom_sf"/>
</dbReference>
<dbReference type="InterPro" id="IPR006311">
    <property type="entry name" value="TAT_signal"/>
</dbReference>
<dbReference type="InterPro" id="IPR019546">
    <property type="entry name" value="TAT_signal_bac_arc"/>
</dbReference>
<dbReference type="NCBIfam" id="TIGR01409">
    <property type="entry name" value="TAT_signal_seq"/>
    <property type="match status" value="1"/>
</dbReference>
<dbReference type="PANTHER" id="PTHR43818">
    <property type="entry name" value="BCDNA.GH03377"/>
    <property type="match status" value="1"/>
</dbReference>
<dbReference type="PANTHER" id="PTHR43818:SF1">
    <property type="entry name" value="GLYCOSYL HYDROLASE FAMILY 109 PROTEIN"/>
    <property type="match status" value="1"/>
</dbReference>
<dbReference type="Pfam" id="PF01408">
    <property type="entry name" value="GFO_IDH_MocA"/>
    <property type="match status" value="1"/>
</dbReference>
<dbReference type="Pfam" id="PF21252">
    <property type="entry name" value="Glyco_hydro_109_C"/>
    <property type="match status" value="1"/>
</dbReference>
<dbReference type="Pfam" id="PF10518">
    <property type="entry name" value="TAT_signal"/>
    <property type="match status" value="1"/>
</dbReference>
<dbReference type="SUPFAM" id="SSF51735">
    <property type="entry name" value="NAD(P)-binding Rossmann-fold domains"/>
    <property type="match status" value="1"/>
</dbReference>
<dbReference type="PROSITE" id="PS51318">
    <property type="entry name" value="TAT"/>
    <property type="match status" value="1"/>
</dbReference>
<accession>A0KV43</accession>
<proteinExistence type="inferred from homology"/>
<gene>
    <name type="ordered locus">Shewana3_1428</name>
</gene>
<comment type="function">
    <text evidence="1">Glycosidase.</text>
</comment>
<comment type="cofactor">
    <cofactor evidence="1">
        <name>NAD(+)</name>
        <dbReference type="ChEBI" id="CHEBI:57540"/>
    </cofactor>
    <text evidence="1">Binds 1 NAD(+) per subunit. The NAD(+) cannot dissociate.</text>
</comment>
<comment type="PTM">
    <text>Predicted to be exported by the Tat system. The position of the signal peptide cleavage has not been experimentally proven.</text>
</comment>
<comment type="similarity">
    <text evidence="3">Belongs to the Gfo/Idh/MocA family. Glycosyl hydrolase 109 subfamily.</text>
</comment>
<sequence>MHNIHRRHFLKAAGAVTAGLVTANIALNANASSVAPKPRVGKSVIGLIAPKMELVRVGFIGVGERGFSHVEQFCHLEGVELKAICDTHQAVIDRAVEHIVKQNRPKPAVYTGNDLSYRELLNRDDIDIVIISTPWEWHAPMAIDTMESGKHAFVEVPLALTVEECWQLVDTAERTQKNCMMMENVNYGREELMVLNMVRQGVFGELLHGEAAYIHELRWQMKEIDHKTGSWRTYWHTKRNGNLYPTHGLGPISQYMNINRGDRFDYLTSMSSPALGRALYAKREFPADHERNQLKYINGDMSTSLIKTVKGRTIMVQHDTTTPRPYSRHNLIQGTNGVFAGFPNRIAVEHGGFGKSYHEWDMDMQKWYDKYDHPLWQRIGKEAEINGGHGGMDFVMLWRMVYCLRNGEALDQDVYDGAAWSVVNILSEQSLNNRSNSVNFPDFTRGAWEHATPLGIVGA</sequence>
<protein>
    <recommendedName>
        <fullName>Glycosyl hydrolase family 109 protein 1</fullName>
        <ecNumber>3.2.1.-</ecNumber>
    </recommendedName>
</protein>
<feature type="signal peptide" description="Tat-type signal" evidence="2">
    <location>
        <begin position="1"/>
        <end position="31"/>
    </location>
</feature>
<feature type="chain" id="PRO_0000348563" description="Glycosyl hydrolase family 109 protein 1">
    <location>
        <begin position="32"/>
        <end position="459"/>
    </location>
</feature>
<feature type="binding site" evidence="1">
    <location>
        <begin position="64"/>
        <end position="65"/>
    </location>
    <ligand>
        <name>NAD(+)</name>
        <dbReference type="ChEBI" id="CHEBI:57540"/>
    </ligand>
</feature>
<feature type="binding site" evidence="1">
    <location>
        <position position="86"/>
    </location>
    <ligand>
        <name>NAD(+)</name>
        <dbReference type="ChEBI" id="CHEBI:57540"/>
    </ligand>
</feature>
<feature type="binding site" evidence="1">
    <location>
        <begin position="135"/>
        <end position="138"/>
    </location>
    <ligand>
        <name>NAD(+)</name>
        <dbReference type="ChEBI" id="CHEBI:57540"/>
    </ligand>
</feature>
<feature type="binding site" evidence="1">
    <location>
        <begin position="155"/>
        <end position="156"/>
    </location>
    <ligand>
        <name>NAD(+)</name>
        <dbReference type="ChEBI" id="CHEBI:57540"/>
    </ligand>
</feature>
<feature type="binding site" evidence="1">
    <location>
        <position position="184"/>
    </location>
    <ligand>
        <name>NAD(+)</name>
        <dbReference type="ChEBI" id="CHEBI:57540"/>
    </ligand>
</feature>
<feature type="binding site" evidence="1">
    <location>
        <position position="213"/>
    </location>
    <ligand>
        <name>substrate</name>
    </ligand>
</feature>
<feature type="binding site" evidence="1">
    <location>
        <position position="232"/>
    </location>
    <ligand>
        <name>substrate</name>
    </ligand>
</feature>
<feature type="binding site" evidence="1">
    <location>
        <begin position="244"/>
        <end position="247"/>
    </location>
    <ligand>
        <name>substrate</name>
    </ligand>
</feature>
<feature type="binding site" evidence="1">
    <location>
        <position position="244"/>
    </location>
    <ligand>
        <name>NAD(+)</name>
        <dbReference type="ChEBI" id="CHEBI:57540"/>
    </ligand>
</feature>
<feature type="binding site" evidence="1">
    <location>
        <position position="326"/>
    </location>
    <ligand>
        <name>substrate</name>
    </ligand>
</feature>
<evidence type="ECO:0000250" key="1"/>
<evidence type="ECO:0000255" key="2">
    <source>
        <dbReference type="PROSITE-ProRule" id="PRU00648"/>
    </source>
</evidence>
<evidence type="ECO:0000305" key="3"/>
<keyword id="KW-0326">Glycosidase</keyword>
<keyword id="KW-0378">Hydrolase</keyword>
<keyword id="KW-0520">NAD</keyword>
<keyword id="KW-0732">Signal</keyword>
<reference key="1">
    <citation type="submission" date="2006-09" db="EMBL/GenBank/DDBJ databases">
        <title>Complete sequence of chromosome 1 of Shewanella sp. ANA-3.</title>
        <authorList>
            <person name="Copeland A."/>
            <person name="Lucas S."/>
            <person name="Lapidus A."/>
            <person name="Barry K."/>
            <person name="Detter J.C."/>
            <person name="Glavina del Rio T."/>
            <person name="Hammon N."/>
            <person name="Israni S."/>
            <person name="Dalin E."/>
            <person name="Tice H."/>
            <person name="Pitluck S."/>
            <person name="Chertkov O."/>
            <person name="Brettin T."/>
            <person name="Bruce D."/>
            <person name="Han C."/>
            <person name="Tapia R."/>
            <person name="Gilna P."/>
            <person name="Schmutz J."/>
            <person name="Larimer F."/>
            <person name="Land M."/>
            <person name="Hauser L."/>
            <person name="Kyrpides N."/>
            <person name="Kim E."/>
            <person name="Newman D."/>
            <person name="Salticov C."/>
            <person name="Konstantinidis K."/>
            <person name="Klappenback J."/>
            <person name="Tiedje J."/>
            <person name="Richardson P."/>
        </authorList>
    </citation>
    <scope>NUCLEOTIDE SEQUENCE [LARGE SCALE GENOMIC DNA]</scope>
    <source>
        <strain>ANA-3</strain>
    </source>
</reference>